<feature type="chain" id="PRO_0000296739" description="Bifunctional enzyme IspD/IspF">
    <location>
        <begin position="1"/>
        <end position="393"/>
    </location>
</feature>
<feature type="region of interest" description="2-C-methyl-D-erythritol 4-phosphate cytidylyltransferase" evidence="1">
    <location>
        <begin position="1"/>
        <end position="234"/>
    </location>
</feature>
<feature type="region of interest" description="2-C-methyl-D-erythritol 2,4-cyclodiphosphate synthase" evidence="1">
    <location>
        <begin position="235"/>
        <end position="393"/>
    </location>
</feature>
<feature type="binding site" evidence="1">
    <location>
        <begin position="241"/>
        <end position="243"/>
    </location>
    <ligand>
        <name>4-CDP-2-C-methyl-D-erythritol 2-phosphate</name>
        <dbReference type="ChEBI" id="CHEBI:57919"/>
    </ligand>
</feature>
<feature type="binding site" evidence="1">
    <location>
        <position position="241"/>
    </location>
    <ligand>
        <name>a divalent metal cation</name>
        <dbReference type="ChEBI" id="CHEBI:60240"/>
    </ligand>
</feature>
<feature type="binding site" evidence="1">
    <location>
        <position position="243"/>
    </location>
    <ligand>
        <name>a divalent metal cation</name>
        <dbReference type="ChEBI" id="CHEBI:60240"/>
    </ligand>
</feature>
<feature type="binding site" evidence="1">
    <location>
        <begin position="267"/>
        <end position="268"/>
    </location>
    <ligand>
        <name>4-CDP-2-C-methyl-D-erythritol 2-phosphate</name>
        <dbReference type="ChEBI" id="CHEBI:57919"/>
    </ligand>
</feature>
<feature type="binding site" evidence="1">
    <location>
        <position position="275"/>
    </location>
    <ligand>
        <name>a divalent metal cation</name>
        <dbReference type="ChEBI" id="CHEBI:60240"/>
    </ligand>
</feature>
<feature type="binding site" evidence="1">
    <location>
        <begin position="289"/>
        <end position="291"/>
    </location>
    <ligand>
        <name>4-CDP-2-C-methyl-D-erythritol 2-phosphate</name>
        <dbReference type="ChEBI" id="CHEBI:57919"/>
    </ligand>
</feature>
<feature type="binding site" evidence="1">
    <location>
        <begin position="365"/>
        <end position="368"/>
    </location>
    <ligand>
        <name>4-CDP-2-C-methyl-D-erythritol 2-phosphate</name>
        <dbReference type="ChEBI" id="CHEBI:57919"/>
    </ligand>
</feature>
<feature type="binding site" evidence="1">
    <location>
        <position position="372"/>
    </location>
    <ligand>
        <name>4-CDP-2-C-methyl-D-erythritol 2-phosphate</name>
        <dbReference type="ChEBI" id="CHEBI:57919"/>
    </ligand>
</feature>
<feature type="binding site" evidence="1">
    <location>
        <position position="375"/>
    </location>
    <ligand>
        <name>4-CDP-2-C-methyl-D-erythritol 2-phosphate</name>
        <dbReference type="ChEBI" id="CHEBI:57919"/>
    </ligand>
</feature>
<feature type="site" description="Transition state stabilizer" evidence="1">
    <location>
        <position position="19"/>
    </location>
</feature>
<feature type="site" description="Transition state stabilizer" evidence="1">
    <location>
        <position position="26"/>
    </location>
</feature>
<feature type="site" description="Positions MEP for the nucleophilic attack" evidence="1">
    <location>
        <position position="156"/>
    </location>
</feature>
<feature type="site" description="Positions MEP for the nucleophilic attack" evidence="1">
    <location>
        <position position="213"/>
    </location>
</feature>
<feature type="site" description="Transition state stabilizer" evidence="1">
    <location>
        <position position="267"/>
    </location>
</feature>
<feature type="site" description="Transition state stabilizer" evidence="1">
    <location>
        <position position="366"/>
    </location>
</feature>
<proteinExistence type="inferred from homology"/>
<gene>
    <name evidence="1" type="primary">ispDF</name>
    <name type="ordered locus">BBta_4067</name>
</gene>
<protein>
    <recommendedName>
        <fullName evidence="1">Bifunctional enzyme IspD/IspF</fullName>
    </recommendedName>
    <domain>
        <recommendedName>
            <fullName evidence="1">2-C-methyl-D-erythritol 4-phosphate cytidylyltransferase</fullName>
            <ecNumber evidence="1">2.7.7.60</ecNumber>
        </recommendedName>
        <alternativeName>
            <fullName evidence="1">4-diphosphocytidyl-2C-methyl-D-erythritol synthase</fullName>
        </alternativeName>
        <alternativeName>
            <fullName evidence="1">MEP cytidylyltransferase</fullName>
            <shortName evidence="1">MCT</shortName>
        </alternativeName>
    </domain>
    <domain>
        <recommendedName>
            <fullName evidence="1">2-C-methyl-D-erythritol 2,4-cyclodiphosphate synthase</fullName>
            <shortName evidence="1">MECDP-synthase</shortName>
            <shortName evidence="1">MECPP-synthase</shortName>
            <shortName evidence="1">MECPS</shortName>
            <ecNumber evidence="1">4.6.1.12</ecNumber>
        </recommendedName>
    </domain>
</protein>
<keyword id="KW-0414">Isoprene biosynthesis</keyword>
<keyword id="KW-0456">Lyase</keyword>
<keyword id="KW-0479">Metal-binding</keyword>
<keyword id="KW-0511">Multifunctional enzyme</keyword>
<keyword id="KW-0548">Nucleotidyltransferase</keyword>
<keyword id="KW-1185">Reference proteome</keyword>
<keyword id="KW-0808">Transferase</keyword>
<sequence length="393" mass="41631">MTISQRTAAILVAAGRGLRAGTGGPKQYRAIGGRTVIHRALAAFSEHPDVAVVQPVVNPDDIDVFNAAVSGLRHEVPAHGGATRQASVLAGLEALVPHRPDIVLIHDAARPFVTSAVISRAIQAAGKTGAAIPVVPVTDTIKEVTASGDIIATPERAKLRIAQTPQTFKFEVILEAHRRAARDGLTEFTDDAAIAEWAGLTVATFEGDVANMKLTTPEDFVREEARLAAQLGDIRTGTGYDVHAFGEGDHVWLCGLRVPHSKGFLAHSDGDVGLHALVDAILGALADGDIGSHFPPSDMKWKGASSDQFLKYAIERVTARGGRVANLEVTMICERPKIGPLRDQMRARIAEISGVDISRIAVKATTSERLGFTGREEGIAATASATIRLPWSA</sequence>
<organism>
    <name type="scientific">Bradyrhizobium sp. (strain BTAi1 / ATCC BAA-1182)</name>
    <dbReference type="NCBI Taxonomy" id="288000"/>
    <lineage>
        <taxon>Bacteria</taxon>
        <taxon>Pseudomonadati</taxon>
        <taxon>Pseudomonadota</taxon>
        <taxon>Alphaproteobacteria</taxon>
        <taxon>Hyphomicrobiales</taxon>
        <taxon>Nitrobacteraceae</taxon>
        <taxon>Bradyrhizobium</taxon>
    </lineage>
</organism>
<evidence type="ECO:0000255" key="1">
    <source>
        <dbReference type="HAMAP-Rule" id="MF_01520"/>
    </source>
</evidence>
<reference key="1">
    <citation type="journal article" date="2007" name="Science">
        <title>Legumes symbioses: absence of nod genes in photosynthetic bradyrhizobia.</title>
        <authorList>
            <person name="Giraud E."/>
            <person name="Moulin L."/>
            <person name="Vallenet D."/>
            <person name="Barbe V."/>
            <person name="Cytryn E."/>
            <person name="Avarre J.-C."/>
            <person name="Jaubert M."/>
            <person name="Simon D."/>
            <person name="Cartieaux F."/>
            <person name="Prin Y."/>
            <person name="Bena G."/>
            <person name="Hannibal L."/>
            <person name="Fardoux J."/>
            <person name="Kojadinovic M."/>
            <person name="Vuillet L."/>
            <person name="Lajus A."/>
            <person name="Cruveiller S."/>
            <person name="Rouy Z."/>
            <person name="Mangenot S."/>
            <person name="Segurens B."/>
            <person name="Dossat C."/>
            <person name="Franck W.L."/>
            <person name="Chang W.-S."/>
            <person name="Saunders E."/>
            <person name="Bruce D."/>
            <person name="Richardson P."/>
            <person name="Normand P."/>
            <person name="Dreyfus B."/>
            <person name="Pignol D."/>
            <person name="Stacey G."/>
            <person name="Emerich D."/>
            <person name="Vermeglio A."/>
            <person name="Medigue C."/>
            <person name="Sadowsky M."/>
        </authorList>
    </citation>
    <scope>NUCLEOTIDE SEQUENCE [LARGE SCALE GENOMIC DNA]</scope>
    <source>
        <strain>BTAi1 / ATCC BAA-1182</strain>
    </source>
</reference>
<accession>A5EIY9</accession>
<dbReference type="EC" id="2.7.7.60" evidence="1"/>
<dbReference type="EC" id="4.6.1.12" evidence="1"/>
<dbReference type="EMBL" id="CP000494">
    <property type="protein sequence ID" value="ABQ36133.1"/>
    <property type="molecule type" value="Genomic_DNA"/>
</dbReference>
<dbReference type="RefSeq" id="WP_012044135.1">
    <property type="nucleotide sequence ID" value="NC_009485.1"/>
</dbReference>
<dbReference type="SMR" id="A5EIY9"/>
<dbReference type="STRING" id="288000.BBta_4067"/>
<dbReference type="KEGG" id="bbt:BBta_4067"/>
<dbReference type="eggNOG" id="COG0245">
    <property type="taxonomic scope" value="Bacteria"/>
</dbReference>
<dbReference type="eggNOG" id="COG1211">
    <property type="taxonomic scope" value="Bacteria"/>
</dbReference>
<dbReference type="HOGENOM" id="CLU_042800_0_1_5"/>
<dbReference type="OrthoDB" id="9804336at2"/>
<dbReference type="UniPathway" id="UPA00056">
    <property type="reaction ID" value="UER00093"/>
</dbReference>
<dbReference type="UniPathway" id="UPA00056">
    <property type="reaction ID" value="UER00095"/>
</dbReference>
<dbReference type="Proteomes" id="UP000000246">
    <property type="component" value="Chromosome"/>
</dbReference>
<dbReference type="GO" id="GO:0008685">
    <property type="term" value="F:2-C-methyl-D-erythritol 2,4-cyclodiphosphate synthase activity"/>
    <property type="evidence" value="ECO:0007669"/>
    <property type="project" value="UniProtKB-UniRule"/>
</dbReference>
<dbReference type="GO" id="GO:0050518">
    <property type="term" value="F:2-C-methyl-D-erythritol 4-phosphate cytidylyltransferase activity"/>
    <property type="evidence" value="ECO:0007669"/>
    <property type="project" value="UniProtKB-UniRule"/>
</dbReference>
<dbReference type="GO" id="GO:0046872">
    <property type="term" value="F:metal ion binding"/>
    <property type="evidence" value="ECO:0007669"/>
    <property type="project" value="UniProtKB-KW"/>
</dbReference>
<dbReference type="GO" id="GO:0019288">
    <property type="term" value="P:isopentenyl diphosphate biosynthetic process, methylerythritol 4-phosphate pathway"/>
    <property type="evidence" value="ECO:0007669"/>
    <property type="project" value="UniProtKB-UniRule"/>
</dbReference>
<dbReference type="GO" id="GO:0016114">
    <property type="term" value="P:terpenoid biosynthetic process"/>
    <property type="evidence" value="ECO:0007669"/>
    <property type="project" value="InterPro"/>
</dbReference>
<dbReference type="CDD" id="cd02516">
    <property type="entry name" value="CDP-ME_synthetase"/>
    <property type="match status" value="1"/>
</dbReference>
<dbReference type="CDD" id="cd00554">
    <property type="entry name" value="MECDP_synthase"/>
    <property type="match status" value="1"/>
</dbReference>
<dbReference type="FunFam" id="3.90.550.10:FF:000003">
    <property type="entry name" value="2-C-methyl-D-erythritol 4-phosphate cytidylyltransferase"/>
    <property type="match status" value="1"/>
</dbReference>
<dbReference type="Gene3D" id="3.30.1330.50">
    <property type="entry name" value="2-C-methyl-D-erythritol 2,4-cyclodiphosphate synthase"/>
    <property type="match status" value="1"/>
</dbReference>
<dbReference type="Gene3D" id="3.90.550.10">
    <property type="entry name" value="Spore Coat Polysaccharide Biosynthesis Protein SpsA, Chain A"/>
    <property type="match status" value="1"/>
</dbReference>
<dbReference type="HAMAP" id="MF_00108">
    <property type="entry name" value="IspD"/>
    <property type="match status" value="1"/>
</dbReference>
<dbReference type="HAMAP" id="MF_01520">
    <property type="entry name" value="IspDF"/>
    <property type="match status" value="1"/>
</dbReference>
<dbReference type="HAMAP" id="MF_00107">
    <property type="entry name" value="IspF"/>
    <property type="match status" value="1"/>
</dbReference>
<dbReference type="InterPro" id="IPR001228">
    <property type="entry name" value="IspD"/>
</dbReference>
<dbReference type="InterPro" id="IPR026596">
    <property type="entry name" value="IspD/F"/>
</dbReference>
<dbReference type="InterPro" id="IPR034683">
    <property type="entry name" value="IspD/TarI"/>
</dbReference>
<dbReference type="InterPro" id="IPR018294">
    <property type="entry name" value="ISPD_synthase_CS"/>
</dbReference>
<dbReference type="InterPro" id="IPR003526">
    <property type="entry name" value="MECDP_synthase"/>
</dbReference>
<dbReference type="InterPro" id="IPR020555">
    <property type="entry name" value="MECDP_synthase_CS"/>
</dbReference>
<dbReference type="InterPro" id="IPR036571">
    <property type="entry name" value="MECDP_synthase_sf"/>
</dbReference>
<dbReference type="InterPro" id="IPR029044">
    <property type="entry name" value="Nucleotide-diphossugar_trans"/>
</dbReference>
<dbReference type="NCBIfam" id="TIGR00453">
    <property type="entry name" value="ispD"/>
    <property type="match status" value="1"/>
</dbReference>
<dbReference type="NCBIfam" id="TIGR00151">
    <property type="entry name" value="ispF"/>
    <property type="match status" value="1"/>
</dbReference>
<dbReference type="NCBIfam" id="NF006899">
    <property type="entry name" value="PRK09382.1"/>
    <property type="match status" value="1"/>
</dbReference>
<dbReference type="PANTHER" id="PTHR43181">
    <property type="entry name" value="2-C-METHYL-D-ERYTHRITOL 2,4-CYCLODIPHOSPHATE SYNTHASE, CHLOROPLASTIC"/>
    <property type="match status" value="1"/>
</dbReference>
<dbReference type="PANTHER" id="PTHR43181:SF1">
    <property type="entry name" value="2-C-METHYL-D-ERYTHRITOL 2,4-CYCLODIPHOSPHATE SYNTHASE, CHLOROPLASTIC"/>
    <property type="match status" value="1"/>
</dbReference>
<dbReference type="Pfam" id="PF01128">
    <property type="entry name" value="IspD"/>
    <property type="match status" value="1"/>
</dbReference>
<dbReference type="Pfam" id="PF02542">
    <property type="entry name" value="YgbB"/>
    <property type="match status" value="1"/>
</dbReference>
<dbReference type="SUPFAM" id="SSF69765">
    <property type="entry name" value="IpsF-like"/>
    <property type="match status" value="1"/>
</dbReference>
<dbReference type="SUPFAM" id="SSF53448">
    <property type="entry name" value="Nucleotide-diphospho-sugar transferases"/>
    <property type="match status" value="1"/>
</dbReference>
<dbReference type="PROSITE" id="PS01295">
    <property type="entry name" value="ISPD"/>
    <property type="match status" value="1"/>
</dbReference>
<dbReference type="PROSITE" id="PS01350">
    <property type="entry name" value="ISPF"/>
    <property type="match status" value="1"/>
</dbReference>
<comment type="function">
    <text evidence="1">Bifunctional enzyme that catalyzes the formation of 4-diphosphocytidyl-2-C-methyl-D-erythritol from CTP and 2-C-methyl-D-erythritol 4-phosphate (MEP) (IspD), and catalyzes the conversion of 4-diphosphocytidyl-2-C-methyl-D-erythritol 2-phosphate (CDP-ME2P) to 2-C-methyl-D-erythritol 2,4-cyclodiphosphate (ME-CPP) with a corresponding release of cytidine 5-monophosphate (CMP) (IspF).</text>
</comment>
<comment type="catalytic activity">
    <reaction evidence="1">
        <text>2-C-methyl-D-erythritol 4-phosphate + CTP + H(+) = 4-CDP-2-C-methyl-D-erythritol + diphosphate</text>
        <dbReference type="Rhea" id="RHEA:13429"/>
        <dbReference type="ChEBI" id="CHEBI:15378"/>
        <dbReference type="ChEBI" id="CHEBI:33019"/>
        <dbReference type="ChEBI" id="CHEBI:37563"/>
        <dbReference type="ChEBI" id="CHEBI:57823"/>
        <dbReference type="ChEBI" id="CHEBI:58262"/>
        <dbReference type="EC" id="2.7.7.60"/>
    </reaction>
</comment>
<comment type="catalytic activity">
    <reaction evidence="1">
        <text>4-CDP-2-C-methyl-D-erythritol 2-phosphate = 2-C-methyl-D-erythritol 2,4-cyclic diphosphate + CMP</text>
        <dbReference type="Rhea" id="RHEA:23864"/>
        <dbReference type="ChEBI" id="CHEBI:57919"/>
        <dbReference type="ChEBI" id="CHEBI:58483"/>
        <dbReference type="ChEBI" id="CHEBI:60377"/>
        <dbReference type="EC" id="4.6.1.12"/>
    </reaction>
</comment>
<comment type="cofactor">
    <cofactor evidence="1">
        <name>a divalent metal cation</name>
        <dbReference type="ChEBI" id="CHEBI:60240"/>
    </cofactor>
</comment>
<comment type="pathway">
    <text evidence="1">Isoprenoid biosynthesis; isopentenyl diphosphate biosynthesis via DXP pathway; isopentenyl diphosphate from 1-deoxy-D-xylulose 5-phosphate: step 2/6.</text>
</comment>
<comment type="pathway">
    <text evidence="1">Isoprenoid biosynthesis; isopentenyl diphosphate biosynthesis via DXP pathway; isopentenyl diphosphate from 1-deoxy-D-xylulose 5-phosphate: step 4/6.</text>
</comment>
<comment type="similarity">
    <text evidence="1">In the N-terminal section; belongs to the IspD/TarI cytidylyltransferase family. IspD subfamily.</text>
</comment>
<comment type="similarity">
    <text evidence="1">In the C-terminal section; belongs to the IspF family.</text>
</comment>
<name>ISPDF_BRASB</name>